<protein>
    <recommendedName>
        <fullName>Phosphoribosylformylglycinamidine cyclo-ligase, chloroplastic/mitochondrial</fullName>
        <ecNumber>6.3.3.1</ecNumber>
    </recommendedName>
    <alternativeName>
        <fullName>AIR synthase</fullName>
        <shortName>AIRS</shortName>
    </alternativeName>
    <alternativeName>
        <fullName>Phosphoribosyl-aminoimidazole synthetase</fullName>
    </alternativeName>
    <alternativeName>
        <fullName>VUpur5</fullName>
    </alternativeName>
</protein>
<sequence length="388" mass="40427">MSLSACAELSRCFAAAASAKPNSGKSNSTAATSLVISSPIGHDGAVSSVSRSRKTSRIVAEASQGLTYRDAGVDIDAGAELVRRIAKMAPGIGGFGGLYPLGDSYLVAGTDGVGTKLMLAFETGIHDTIGIDLVAMSVNDIVTSGAKPLFFLDYFATGRLDVDVAEKVVKGIVDGCKQSDCVLLGGETAEMPGLYKEGEYDLSGCAVGIVKKDSVINGKNIVAGDVIIGLPSSGVHSNGFSLVRRVLAQSGLSLKDQLPGSNITLAEALMAPTVIYVKQVLDLISKGGVKGIAHITGGGFTDNIPRVFPEGLGALIYDGSWEVPAVFRWLQEAGKIEDSEMRRTFNMGIGMILVVSPEAANRILENKGQADKFYRIGEIISGNGVTFS</sequence>
<comment type="catalytic activity">
    <reaction>
        <text>2-formamido-N(1)-(5-O-phospho-beta-D-ribosyl)acetamidine + ATP = 5-amino-1-(5-phospho-beta-D-ribosyl)imidazole + ADP + phosphate + H(+)</text>
        <dbReference type="Rhea" id="RHEA:23032"/>
        <dbReference type="ChEBI" id="CHEBI:15378"/>
        <dbReference type="ChEBI" id="CHEBI:30616"/>
        <dbReference type="ChEBI" id="CHEBI:43474"/>
        <dbReference type="ChEBI" id="CHEBI:137981"/>
        <dbReference type="ChEBI" id="CHEBI:147287"/>
        <dbReference type="ChEBI" id="CHEBI:456216"/>
        <dbReference type="EC" id="6.3.3.1"/>
    </reaction>
</comment>
<comment type="pathway">
    <text>Purine metabolism; IMP biosynthesis via de novo pathway; 5-amino-1-(5-phospho-D-ribosyl)imidazole from N(2)-formyl-N(1)-(5-phospho-D-ribosyl)glycinamide: step 2/2.</text>
</comment>
<comment type="subcellular location">
    <subcellularLocation>
        <location>Plastid</location>
        <location>Chloroplast</location>
    </subcellularLocation>
    <subcellularLocation>
        <location>Mitochondrion</location>
    </subcellularLocation>
</comment>
<comment type="similarity">
    <text evidence="2">Belongs to the AIR synthase family.</text>
</comment>
<evidence type="ECO:0000255" key="1"/>
<evidence type="ECO:0000305" key="2"/>
<dbReference type="EC" id="6.3.3.1"/>
<dbReference type="EMBL" id="U30895">
    <property type="protein sequence ID" value="AAC14578.1"/>
    <property type="molecule type" value="mRNA"/>
</dbReference>
<dbReference type="PIR" id="T10963">
    <property type="entry name" value="T10963"/>
</dbReference>
<dbReference type="SMR" id="P52424"/>
<dbReference type="BRENDA" id="6.3.3.1">
    <property type="organism ID" value="6657"/>
</dbReference>
<dbReference type="UniPathway" id="UPA00074">
    <property type="reaction ID" value="UER00129"/>
</dbReference>
<dbReference type="GO" id="GO:0009507">
    <property type="term" value="C:chloroplast"/>
    <property type="evidence" value="ECO:0007669"/>
    <property type="project" value="UniProtKB-SubCell"/>
</dbReference>
<dbReference type="GO" id="GO:0005829">
    <property type="term" value="C:cytosol"/>
    <property type="evidence" value="ECO:0007669"/>
    <property type="project" value="TreeGrafter"/>
</dbReference>
<dbReference type="GO" id="GO:0005739">
    <property type="term" value="C:mitochondrion"/>
    <property type="evidence" value="ECO:0007669"/>
    <property type="project" value="UniProtKB-SubCell"/>
</dbReference>
<dbReference type="GO" id="GO:0005524">
    <property type="term" value="F:ATP binding"/>
    <property type="evidence" value="ECO:0007669"/>
    <property type="project" value="UniProtKB-KW"/>
</dbReference>
<dbReference type="GO" id="GO:0004637">
    <property type="term" value="F:phosphoribosylamine-glycine ligase activity"/>
    <property type="evidence" value="ECO:0007669"/>
    <property type="project" value="TreeGrafter"/>
</dbReference>
<dbReference type="GO" id="GO:0004641">
    <property type="term" value="F:phosphoribosylformylglycinamidine cyclo-ligase activity"/>
    <property type="evidence" value="ECO:0007669"/>
    <property type="project" value="UniProtKB-EC"/>
</dbReference>
<dbReference type="GO" id="GO:0006189">
    <property type="term" value="P:'de novo' IMP biosynthetic process"/>
    <property type="evidence" value="ECO:0007669"/>
    <property type="project" value="UniProtKB-UniPathway"/>
</dbReference>
<dbReference type="GO" id="GO:0046084">
    <property type="term" value="P:adenine biosynthetic process"/>
    <property type="evidence" value="ECO:0007669"/>
    <property type="project" value="TreeGrafter"/>
</dbReference>
<dbReference type="CDD" id="cd02196">
    <property type="entry name" value="PurM"/>
    <property type="match status" value="1"/>
</dbReference>
<dbReference type="FunFam" id="3.30.1330.10:FF:000001">
    <property type="entry name" value="Phosphoribosylformylglycinamidine cyclo-ligase"/>
    <property type="match status" value="1"/>
</dbReference>
<dbReference type="FunFam" id="3.90.650.10:FF:000001">
    <property type="entry name" value="Phosphoribosylformylglycinamidine cyclo-ligase"/>
    <property type="match status" value="1"/>
</dbReference>
<dbReference type="Gene3D" id="3.90.650.10">
    <property type="entry name" value="PurM-like C-terminal domain"/>
    <property type="match status" value="1"/>
</dbReference>
<dbReference type="Gene3D" id="3.30.1330.10">
    <property type="entry name" value="PurM-like, N-terminal domain"/>
    <property type="match status" value="1"/>
</dbReference>
<dbReference type="HAMAP" id="MF_00741">
    <property type="entry name" value="AIRS"/>
    <property type="match status" value="1"/>
</dbReference>
<dbReference type="InterPro" id="IPR010918">
    <property type="entry name" value="PurM-like_C_dom"/>
</dbReference>
<dbReference type="InterPro" id="IPR036676">
    <property type="entry name" value="PurM-like_C_sf"/>
</dbReference>
<dbReference type="InterPro" id="IPR016188">
    <property type="entry name" value="PurM-like_N"/>
</dbReference>
<dbReference type="InterPro" id="IPR036921">
    <property type="entry name" value="PurM-like_N_sf"/>
</dbReference>
<dbReference type="InterPro" id="IPR004733">
    <property type="entry name" value="PurM_cligase"/>
</dbReference>
<dbReference type="NCBIfam" id="TIGR00878">
    <property type="entry name" value="purM"/>
    <property type="match status" value="1"/>
</dbReference>
<dbReference type="PANTHER" id="PTHR10520:SF12">
    <property type="entry name" value="TRIFUNCTIONAL PURINE BIOSYNTHETIC PROTEIN ADENOSINE-3"/>
    <property type="match status" value="1"/>
</dbReference>
<dbReference type="PANTHER" id="PTHR10520">
    <property type="entry name" value="TRIFUNCTIONAL PURINE BIOSYNTHETIC PROTEIN ADENOSINE-3-RELATED"/>
    <property type="match status" value="1"/>
</dbReference>
<dbReference type="Pfam" id="PF00586">
    <property type="entry name" value="AIRS"/>
    <property type="match status" value="1"/>
</dbReference>
<dbReference type="Pfam" id="PF02769">
    <property type="entry name" value="AIRS_C"/>
    <property type="match status" value="1"/>
</dbReference>
<dbReference type="SUPFAM" id="SSF56042">
    <property type="entry name" value="PurM C-terminal domain-like"/>
    <property type="match status" value="1"/>
</dbReference>
<dbReference type="SUPFAM" id="SSF55326">
    <property type="entry name" value="PurM N-terminal domain-like"/>
    <property type="match status" value="1"/>
</dbReference>
<feature type="transit peptide" description="Chloroplast and mitochondrion" evidence="1">
    <location>
        <begin position="1"/>
        <end status="unknown"/>
    </location>
</feature>
<feature type="chain" id="PRO_0000029882" description="Phosphoribosylformylglycinamidine cyclo-ligase, chloroplastic/mitochondrial">
    <location>
        <begin status="unknown"/>
        <end position="388"/>
    </location>
</feature>
<name>PUR5_VIGUN</name>
<keyword id="KW-0067">ATP-binding</keyword>
<keyword id="KW-0150">Chloroplast</keyword>
<keyword id="KW-0436">Ligase</keyword>
<keyword id="KW-0496">Mitochondrion</keyword>
<keyword id="KW-0547">Nucleotide-binding</keyword>
<keyword id="KW-0934">Plastid</keyword>
<keyword id="KW-0658">Purine biosynthesis</keyword>
<keyword id="KW-0809">Transit peptide</keyword>
<proteinExistence type="evidence at transcript level"/>
<organism>
    <name type="scientific">Vigna unguiculata</name>
    <name type="common">Cowpea</name>
    <dbReference type="NCBI Taxonomy" id="3917"/>
    <lineage>
        <taxon>Eukaryota</taxon>
        <taxon>Viridiplantae</taxon>
        <taxon>Streptophyta</taxon>
        <taxon>Embryophyta</taxon>
        <taxon>Tracheophyta</taxon>
        <taxon>Spermatophyta</taxon>
        <taxon>Magnoliopsida</taxon>
        <taxon>eudicotyledons</taxon>
        <taxon>Gunneridae</taxon>
        <taxon>Pentapetalae</taxon>
        <taxon>rosids</taxon>
        <taxon>fabids</taxon>
        <taxon>Fabales</taxon>
        <taxon>Fabaceae</taxon>
        <taxon>Papilionoideae</taxon>
        <taxon>50 kb inversion clade</taxon>
        <taxon>NPAAA clade</taxon>
        <taxon>indigoferoid/millettioid clade</taxon>
        <taxon>Phaseoleae</taxon>
        <taxon>Vigna</taxon>
    </lineage>
</organism>
<gene>
    <name type="primary">PUR5</name>
</gene>
<reference key="1">
    <citation type="journal article" date="1998" name="Plant Mol. Biol.">
        <title>AIR synthetase in cowpea nodules: a single gene product targeted to two organelles?</title>
        <authorList>
            <person name="Smith P.M.C."/>
            <person name="Mann A.J."/>
            <person name="Goggin D.E."/>
            <person name="Atkins C.A."/>
        </authorList>
    </citation>
    <scope>NUCLEOTIDE SEQUENCE [MRNA]</scope>
    <source>
        <strain>cv. Vita 3</strain>
        <tissue>Root nodule</tissue>
    </source>
</reference>
<accession>P52424</accession>